<evidence type="ECO:0000250" key="1">
    <source>
        <dbReference type="UniProtKB" id="Q61539"/>
    </source>
</evidence>
<evidence type="ECO:0000255" key="2">
    <source>
        <dbReference type="PROSITE-ProRule" id="PRU00407"/>
    </source>
</evidence>
<evidence type="ECO:0000255" key="3">
    <source>
        <dbReference type="PROSITE-ProRule" id="PRU01189"/>
    </source>
</evidence>
<evidence type="ECO:0000256" key="4">
    <source>
        <dbReference type="SAM" id="MobiDB-lite"/>
    </source>
</evidence>
<evidence type="ECO:0000269" key="5">
    <source>
    </source>
</evidence>
<evidence type="ECO:0000269" key="6">
    <source>
    </source>
</evidence>
<evidence type="ECO:0000269" key="7">
    <source>
    </source>
</evidence>
<evidence type="ECO:0000269" key="8">
    <source>
    </source>
</evidence>
<evidence type="ECO:0000269" key="9">
    <source>
    </source>
</evidence>
<evidence type="ECO:0000269" key="10">
    <source>
    </source>
</evidence>
<evidence type="ECO:0000269" key="11">
    <source>
    </source>
</evidence>
<evidence type="ECO:0000303" key="12">
    <source>
    </source>
</evidence>
<evidence type="ECO:0000305" key="13"/>
<evidence type="ECO:0000312" key="14">
    <source>
        <dbReference type="HGNC" id="HGNC:3473"/>
    </source>
</evidence>
<evidence type="ECO:0007829" key="15">
    <source>
        <dbReference type="PDB" id="1LO1"/>
    </source>
</evidence>
<evidence type="ECO:0007829" key="16">
    <source>
        <dbReference type="PDB" id="6LIT"/>
    </source>
</evidence>
<evidence type="ECO:0007829" key="17">
    <source>
        <dbReference type="PDB" id="6LN4"/>
    </source>
</evidence>
<dbReference type="EMBL" id="AF094517">
    <property type="protein sequence ID" value="AAC99409.1"/>
    <property type="molecule type" value="mRNA"/>
</dbReference>
<dbReference type="EMBL" id="AY451389">
    <property type="protein sequence ID" value="AAS15571.1"/>
    <property type="molecule type" value="mRNA"/>
</dbReference>
<dbReference type="EMBL" id="AY451390">
    <property type="protein sequence ID" value="AAS15572.1"/>
    <property type="molecule type" value="mRNA"/>
</dbReference>
<dbReference type="EMBL" id="AB307714">
    <property type="protein sequence ID" value="BAH02305.1"/>
    <property type="molecule type" value="mRNA"/>
</dbReference>
<dbReference type="EMBL" id="HQ692852">
    <property type="protein sequence ID" value="ADZ17363.1"/>
    <property type="molecule type" value="mRNA"/>
</dbReference>
<dbReference type="EMBL" id="AC008050">
    <property type="protein sequence ID" value="AAG17472.1"/>
    <property type="molecule type" value="Genomic_DNA"/>
</dbReference>
<dbReference type="EMBL" id="AC016543">
    <property type="status" value="NOT_ANNOTATED_CDS"/>
    <property type="molecule type" value="Genomic_DNA"/>
</dbReference>
<dbReference type="EMBL" id="BC131517">
    <property type="protein sequence ID" value="AAI31518.1"/>
    <property type="molecule type" value="mRNA"/>
</dbReference>
<dbReference type="CCDS" id="CCDS9850.2">
    <molecule id="O95718-1"/>
</dbReference>
<dbReference type="RefSeq" id="NP_004443.3">
    <molecule id="O95718-1"/>
    <property type="nucleotide sequence ID" value="NM_004452.3"/>
</dbReference>
<dbReference type="RefSeq" id="XP_016876575.1">
    <property type="nucleotide sequence ID" value="XM_017021086.1"/>
</dbReference>
<dbReference type="PDB" id="1LO1">
    <property type="method" value="NMR"/>
    <property type="chains" value="A=97-192"/>
</dbReference>
<dbReference type="PDB" id="6LIT">
    <property type="method" value="X-ray"/>
    <property type="resolution" value="2.00 A"/>
    <property type="chains" value="A/B=204-433"/>
</dbReference>
<dbReference type="PDB" id="6LN4">
    <property type="method" value="X-ray"/>
    <property type="resolution" value="2.61 A"/>
    <property type="chains" value="A=204-432"/>
</dbReference>
<dbReference type="PDBsum" id="1LO1"/>
<dbReference type="PDBsum" id="6LIT"/>
<dbReference type="PDBsum" id="6LN4"/>
<dbReference type="BMRB" id="O95718"/>
<dbReference type="SMR" id="O95718"/>
<dbReference type="BioGRID" id="108406">
    <property type="interactions" value="105"/>
</dbReference>
<dbReference type="FunCoup" id="O95718">
    <property type="interactions" value="963"/>
</dbReference>
<dbReference type="IntAct" id="O95718">
    <property type="interactions" value="9"/>
</dbReference>
<dbReference type="STRING" id="9606.ENSP00000370270"/>
<dbReference type="BindingDB" id="O95718"/>
<dbReference type="ChEMBL" id="CHEMBL3751"/>
<dbReference type="DrugBank" id="DB00288">
    <property type="generic name" value="Amcinonide"/>
</dbReference>
<dbReference type="DrugBank" id="DB00995">
    <property type="generic name" value="Auranofin"/>
</dbReference>
<dbReference type="DrugBank" id="DB01380">
    <property type="generic name" value="Cortisone acetate"/>
</dbReference>
<dbReference type="DrugBank" id="DB01260">
    <property type="generic name" value="Desonide"/>
</dbReference>
<dbReference type="DrugBank" id="DB00547">
    <property type="generic name" value="Desoximetasone"/>
</dbReference>
<dbReference type="DrugBank" id="DB00255">
    <property type="generic name" value="Diethylstilbestrol"/>
</dbReference>
<dbReference type="DrugBank" id="DB07776">
    <property type="generic name" value="Flavone"/>
</dbReference>
<dbReference type="DrugBank" id="DB00663">
    <property type="generic name" value="Flumethasone"/>
</dbReference>
<dbReference type="DrugBank" id="DB01047">
    <property type="generic name" value="Fluocinonide"/>
</dbReference>
<dbReference type="DrugBank" id="DB00846">
    <property type="generic name" value="Flurandrenolide"/>
</dbReference>
<dbReference type="DrugBank" id="DB01645">
    <property type="generic name" value="Genistein"/>
</dbReference>
<dbReference type="DrugBank" id="DB06786">
    <property type="generic name" value="Halcinonide"/>
</dbReference>
<dbReference type="DrugBank" id="DB14596">
    <property type="generic name" value="Loteprednol etabonate"/>
</dbReference>
<dbReference type="DrugBank" id="DB00253">
    <property type="generic name" value="Medrysone"/>
</dbReference>
<dbReference type="DrugBank" id="DB01130">
    <property type="generic name" value="Prednicarbate"/>
</dbReference>
<dbReference type="DrugBank" id="DB00596">
    <property type="generic name" value="Ulobetasol"/>
</dbReference>
<dbReference type="DrugCentral" id="O95718"/>
<dbReference type="GuidetoPHARMACOLOGY" id="623"/>
<dbReference type="iPTMnet" id="O95718"/>
<dbReference type="PhosphoSitePlus" id="O95718"/>
<dbReference type="SwissPalm" id="O95718"/>
<dbReference type="BioMuta" id="ESRRB"/>
<dbReference type="MassIVE" id="O95718"/>
<dbReference type="PaxDb" id="9606-ENSP00000422488"/>
<dbReference type="PeptideAtlas" id="O95718"/>
<dbReference type="ProteomicsDB" id="51011">
    <molecule id="O95718-1"/>
</dbReference>
<dbReference type="ProteomicsDB" id="51012">
    <molecule id="O95718-2"/>
</dbReference>
<dbReference type="ProteomicsDB" id="51013">
    <molecule id="O95718-3"/>
</dbReference>
<dbReference type="Antibodypedia" id="13059">
    <property type="antibodies" value="309 antibodies from 36 providers"/>
</dbReference>
<dbReference type="DNASU" id="2103"/>
<dbReference type="Ensembl" id="ENST00000380887.7">
    <molecule id="O95718-1"/>
    <property type="protein sequence ID" value="ENSP00000370270.2"/>
    <property type="gene ID" value="ENSG00000119715.15"/>
</dbReference>
<dbReference type="Ensembl" id="ENST00000505752.6">
    <molecule id="O95718-2"/>
    <property type="protein sequence ID" value="ENSP00000423004.1"/>
    <property type="gene ID" value="ENSG00000119715.15"/>
</dbReference>
<dbReference type="Ensembl" id="ENST00000509242.5">
    <molecule id="O95718-1"/>
    <property type="protein sequence ID" value="ENSP00000422488.1"/>
    <property type="gene ID" value="ENSG00000119715.15"/>
</dbReference>
<dbReference type="GeneID" id="2103"/>
<dbReference type="KEGG" id="hsa:2103"/>
<dbReference type="UCSC" id="uc001xsq.2">
    <molecule id="O95718-3"/>
    <property type="organism name" value="human"/>
</dbReference>
<dbReference type="AGR" id="HGNC:3473"/>
<dbReference type="CTD" id="2103"/>
<dbReference type="DisGeNET" id="2103"/>
<dbReference type="GeneCards" id="ESRRB"/>
<dbReference type="GeneReviews" id="ESRRB"/>
<dbReference type="HGNC" id="HGNC:3473">
    <property type="gene designation" value="ESRRB"/>
</dbReference>
<dbReference type="HPA" id="ENSG00000119715">
    <property type="expression patterns" value="Tissue enriched (retina)"/>
</dbReference>
<dbReference type="MalaCards" id="ESRRB"/>
<dbReference type="MIM" id="602167">
    <property type="type" value="gene"/>
</dbReference>
<dbReference type="MIM" id="608565">
    <property type="type" value="phenotype"/>
</dbReference>
<dbReference type="neXtProt" id="NX_O95718"/>
<dbReference type="OpenTargets" id="ENSG00000119715"/>
<dbReference type="Orphanet" id="90636">
    <property type="disease" value="Rare autosomal recessive non-syndromic sensorineural deafness type DFNB"/>
</dbReference>
<dbReference type="PharmGKB" id="PA27889"/>
<dbReference type="VEuPathDB" id="HostDB:ENSG00000119715"/>
<dbReference type="eggNOG" id="KOG3575">
    <property type="taxonomic scope" value="Eukaryota"/>
</dbReference>
<dbReference type="GeneTree" id="ENSGT00940000153433"/>
<dbReference type="HOGENOM" id="CLU_007368_11_0_1"/>
<dbReference type="InParanoid" id="O95718"/>
<dbReference type="OrthoDB" id="5799427at2759"/>
<dbReference type="PAN-GO" id="O95718">
    <property type="GO annotations" value="3 GO annotations based on evolutionary models"/>
</dbReference>
<dbReference type="TreeFam" id="TF323751"/>
<dbReference type="PathwayCommons" id="O95718"/>
<dbReference type="Reactome" id="R-HSA-383280">
    <property type="pathway name" value="Nuclear Receptor transcription pathway"/>
</dbReference>
<dbReference type="SignaLink" id="O95718"/>
<dbReference type="SIGNOR" id="O95718"/>
<dbReference type="BioGRID-ORCS" id="2103">
    <property type="hits" value="14 hits in 1180 CRISPR screens"/>
</dbReference>
<dbReference type="ChiTaRS" id="ESRRB">
    <property type="organism name" value="human"/>
</dbReference>
<dbReference type="EvolutionaryTrace" id="O95718"/>
<dbReference type="GeneWiki" id="Estrogen-related_receptor_beta"/>
<dbReference type="GenomeRNAi" id="2103"/>
<dbReference type="Pharos" id="O95718">
    <property type="development level" value="Tchem"/>
</dbReference>
<dbReference type="PRO" id="PR:O95718"/>
<dbReference type="Proteomes" id="UP000005640">
    <property type="component" value="Chromosome 14"/>
</dbReference>
<dbReference type="RNAct" id="O95718">
    <property type="molecule type" value="protein"/>
</dbReference>
<dbReference type="Bgee" id="ENSG00000119715">
    <property type="expression patterns" value="Expressed in metanephros cortex and 90 other cell types or tissues"/>
</dbReference>
<dbReference type="ExpressionAtlas" id="O95718">
    <property type="expression patterns" value="baseline and differential"/>
</dbReference>
<dbReference type="GO" id="GO:0000785">
    <property type="term" value="C:chromatin"/>
    <property type="evidence" value="ECO:0000247"/>
    <property type="project" value="NTNU_SB"/>
</dbReference>
<dbReference type="GO" id="GO:0000793">
    <property type="term" value="C:condensed chromosome"/>
    <property type="evidence" value="ECO:0000250"/>
    <property type="project" value="UniProtKB"/>
</dbReference>
<dbReference type="GO" id="GO:0005737">
    <property type="term" value="C:cytoplasm"/>
    <property type="evidence" value="ECO:0000250"/>
    <property type="project" value="UniProtKB"/>
</dbReference>
<dbReference type="GO" id="GO:0005829">
    <property type="term" value="C:cytosol"/>
    <property type="evidence" value="ECO:0000314"/>
    <property type="project" value="HPA"/>
</dbReference>
<dbReference type="GO" id="GO:0005654">
    <property type="term" value="C:nucleoplasm"/>
    <property type="evidence" value="ECO:0000314"/>
    <property type="project" value="HPA"/>
</dbReference>
<dbReference type="GO" id="GO:0005634">
    <property type="term" value="C:nucleus"/>
    <property type="evidence" value="ECO:0000250"/>
    <property type="project" value="BHF-UCL"/>
</dbReference>
<dbReference type="GO" id="GO:0000987">
    <property type="term" value="F:cis-regulatory region sequence-specific DNA binding"/>
    <property type="evidence" value="ECO:0000250"/>
    <property type="project" value="UniProtKB"/>
</dbReference>
<dbReference type="GO" id="GO:0001228">
    <property type="term" value="F:DNA-binding transcription activator activity, RNA polymerase II-specific"/>
    <property type="evidence" value="ECO:0000250"/>
    <property type="project" value="UniProtKB"/>
</dbReference>
<dbReference type="GO" id="GO:0003700">
    <property type="term" value="F:DNA-binding transcription factor activity"/>
    <property type="evidence" value="ECO:0000250"/>
    <property type="project" value="UniProtKB"/>
</dbReference>
<dbReference type="GO" id="GO:0000981">
    <property type="term" value="F:DNA-binding transcription factor activity, RNA polymerase II-specific"/>
    <property type="evidence" value="ECO:0000314"/>
    <property type="project" value="UniProtKB"/>
</dbReference>
<dbReference type="GO" id="GO:0034056">
    <property type="term" value="F:estrogen response element binding"/>
    <property type="evidence" value="ECO:0000318"/>
    <property type="project" value="GO_Central"/>
</dbReference>
<dbReference type="GO" id="GO:0004879">
    <property type="term" value="F:nuclear receptor activity"/>
    <property type="evidence" value="ECO:0000250"/>
    <property type="project" value="UniProtKB"/>
</dbReference>
<dbReference type="GO" id="GO:0003707">
    <property type="term" value="F:nuclear steroid receptor activity"/>
    <property type="evidence" value="ECO:0007669"/>
    <property type="project" value="InterPro"/>
</dbReference>
<dbReference type="GO" id="GO:0000978">
    <property type="term" value="F:RNA polymerase II cis-regulatory region sequence-specific DNA binding"/>
    <property type="evidence" value="ECO:0000250"/>
    <property type="project" value="UniProtKB"/>
</dbReference>
<dbReference type="GO" id="GO:0000993">
    <property type="term" value="F:RNA polymerase II complex binding"/>
    <property type="evidence" value="ECO:0000250"/>
    <property type="project" value="UniProtKB"/>
</dbReference>
<dbReference type="GO" id="GO:0061629">
    <property type="term" value="F:RNA polymerase II-specific DNA-binding transcription factor binding"/>
    <property type="evidence" value="ECO:0000250"/>
    <property type="project" value="BHF-UCL"/>
</dbReference>
<dbReference type="GO" id="GO:0043565">
    <property type="term" value="F:sequence-specific DNA binding"/>
    <property type="evidence" value="ECO:0000314"/>
    <property type="project" value="UniProtKB"/>
</dbReference>
<dbReference type="GO" id="GO:1990837">
    <property type="term" value="F:sequence-specific double-stranded DNA binding"/>
    <property type="evidence" value="ECO:0000314"/>
    <property type="project" value="ARUK-UCL"/>
</dbReference>
<dbReference type="GO" id="GO:0005496">
    <property type="term" value="F:steroid binding"/>
    <property type="evidence" value="ECO:0007669"/>
    <property type="project" value="InterPro"/>
</dbReference>
<dbReference type="GO" id="GO:0008270">
    <property type="term" value="F:zinc ion binding"/>
    <property type="evidence" value="ECO:0007669"/>
    <property type="project" value="UniProtKB-KW"/>
</dbReference>
<dbReference type="GO" id="GO:0043697">
    <property type="term" value="P:cell dedifferentiation"/>
    <property type="evidence" value="ECO:0000250"/>
    <property type="project" value="UniProtKB"/>
</dbReference>
<dbReference type="GO" id="GO:0008283">
    <property type="term" value="P:cell population proliferation"/>
    <property type="evidence" value="ECO:0000314"/>
    <property type="project" value="UniProtKB"/>
</dbReference>
<dbReference type="GO" id="GO:0048839">
    <property type="term" value="P:inner ear development"/>
    <property type="evidence" value="ECO:0000250"/>
    <property type="project" value="UniProtKB"/>
</dbReference>
<dbReference type="GO" id="GO:0140001">
    <property type="term" value="P:morula formation"/>
    <property type="evidence" value="ECO:0000250"/>
    <property type="project" value="UniProtKB"/>
</dbReference>
<dbReference type="GO" id="GO:2000737">
    <property type="term" value="P:negative regulation of stem cell differentiation"/>
    <property type="evidence" value="ECO:0000250"/>
    <property type="project" value="UniProtKB"/>
</dbReference>
<dbReference type="GO" id="GO:0045494">
    <property type="term" value="P:photoreceptor cell maintenance"/>
    <property type="evidence" value="ECO:0000250"/>
    <property type="project" value="UniProtKB"/>
</dbReference>
<dbReference type="GO" id="GO:0045893">
    <property type="term" value="P:positive regulation of DNA-templated transcription"/>
    <property type="evidence" value="ECO:0000250"/>
    <property type="project" value="UniProtKB"/>
</dbReference>
<dbReference type="GO" id="GO:1902459">
    <property type="term" value="P:positive regulation of stem cell population maintenance"/>
    <property type="evidence" value="ECO:0000250"/>
    <property type="project" value="UniProtKB"/>
</dbReference>
<dbReference type="GO" id="GO:0045944">
    <property type="term" value="P:positive regulation of transcription by RNA polymerase II"/>
    <property type="evidence" value="ECO:0000250"/>
    <property type="project" value="UniProtKB"/>
</dbReference>
<dbReference type="GO" id="GO:0006355">
    <property type="term" value="P:regulation of DNA-templated transcription"/>
    <property type="evidence" value="ECO:0000314"/>
    <property type="project" value="UniProtKB"/>
</dbReference>
<dbReference type="GO" id="GO:2000035">
    <property type="term" value="P:regulation of stem cell division"/>
    <property type="evidence" value="ECO:0000250"/>
    <property type="project" value="UniProtKB"/>
</dbReference>
<dbReference type="GO" id="GO:0006357">
    <property type="term" value="P:regulation of transcription by RNA polymerase II"/>
    <property type="evidence" value="ECO:0000318"/>
    <property type="project" value="GO_Central"/>
</dbReference>
<dbReference type="GO" id="GO:0035019">
    <property type="term" value="P:somatic stem cell population maintenance"/>
    <property type="evidence" value="ECO:0000250"/>
    <property type="project" value="UniProtKB"/>
</dbReference>
<dbReference type="GO" id="GO:0017145">
    <property type="term" value="P:stem cell division"/>
    <property type="evidence" value="ECO:0000250"/>
    <property type="project" value="UniProtKB"/>
</dbReference>
<dbReference type="GO" id="GO:0019827">
    <property type="term" value="P:stem cell population maintenance"/>
    <property type="evidence" value="ECO:0000314"/>
    <property type="project" value="UniProtKB"/>
</dbReference>
<dbReference type="CDD" id="cd07170">
    <property type="entry name" value="NR_DBD_ERR"/>
    <property type="match status" value="1"/>
</dbReference>
<dbReference type="CDD" id="cd06946">
    <property type="entry name" value="NR_LBD_ERR"/>
    <property type="match status" value="1"/>
</dbReference>
<dbReference type="DisProt" id="DP01764"/>
<dbReference type="FunFam" id="1.10.565.10:FF:000009">
    <property type="entry name" value="estrogen-related receptor gamma isoform X1"/>
    <property type="match status" value="1"/>
</dbReference>
<dbReference type="FunFam" id="3.30.50.10:FF:000008">
    <property type="entry name" value="estrogen-related receptor gamma isoform X1"/>
    <property type="match status" value="1"/>
</dbReference>
<dbReference type="Gene3D" id="3.30.50.10">
    <property type="entry name" value="Erythroid Transcription Factor GATA-1, subunit A"/>
    <property type="match status" value="1"/>
</dbReference>
<dbReference type="Gene3D" id="1.10.565.10">
    <property type="entry name" value="Retinoid X Receptor"/>
    <property type="match status" value="1"/>
</dbReference>
<dbReference type="IDEAL" id="IID00011"/>
<dbReference type="InterPro" id="IPR024178">
    <property type="entry name" value="Est_rcpt/est-rel_rcp"/>
</dbReference>
<dbReference type="InterPro" id="IPR035500">
    <property type="entry name" value="NHR-like_dom_sf"/>
</dbReference>
<dbReference type="InterPro" id="IPR000536">
    <property type="entry name" value="Nucl_hrmn_rcpt_lig-bd"/>
</dbReference>
<dbReference type="InterPro" id="IPR050200">
    <property type="entry name" value="Nuclear_hormone_rcpt_NR3"/>
</dbReference>
<dbReference type="InterPro" id="IPR001723">
    <property type="entry name" value="Nuclear_hrmn_rcpt"/>
</dbReference>
<dbReference type="InterPro" id="IPR027289">
    <property type="entry name" value="Oest-rel_rcp"/>
</dbReference>
<dbReference type="InterPro" id="IPR001628">
    <property type="entry name" value="Znf_hrmn_rcpt"/>
</dbReference>
<dbReference type="InterPro" id="IPR013088">
    <property type="entry name" value="Znf_NHR/GATA"/>
</dbReference>
<dbReference type="PANTHER" id="PTHR48092">
    <property type="entry name" value="KNIRPS-RELATED PROTEIN-RELATED"/>
    <property type="match status" value="1"/>
</dbReference>
<dbReference type="Pfam" id="PF00104">
    <property type="entry name" value="Hormone_recep"/>
    <property type="match status" value="1"/>
</dbReference>
<dbReference type="Pfam" id="PF00105">
    <property type="entry name" value="zf-C4"/>
    <property type="match status" value="1"/>
</dbReference>
<dbReference type="PIRSF" id="PIRSF002527">
    <property type="entry name" value="ER-like_NR"/>
    <property type="match status" value="1"/>
</dbReference>
<dbReference type="PIRSF" id="PIRSF500939">
    <property type="entry name" value="ERR1-2-3"/>
    <property type="match status" value="1"/>
</dbReference>
<dbReference type="PRINTS" id="PR00398">
    <property type="entry name" value="STRDHORMONER"/>
</dbReference>
<dbReference type="PRINTS" id="PR00047">
    <property type="entry name" value="STROIDFINGER"/>
</dbReference>
<dbReference type="SMART" id="SM00430">
    <property type="entry name" value="HOLI"/>
    <property type="match status" value="1"/>
</dbReference>
<dbReference type="SMART" id="SM00399">
    <property type="entry name" value="ZnF_C4"/>
    <property type="match status" value="1"/>
</dbReference>
<dbReference type="SUPFAM" id="SSF57716">
    <property type="entry name" value="Glucocorticoid receptor-like (DNA-binding domain)"/>
    <property type="match status" value="1"/>
</dbReference>
<dbReference type="SUPFAM" id="SSF48508">
    <property type="entry name" value="Nuclear receptor ligand-binding domain"/>
    <property type="match status" value="1"/>
</dbReference>
<dbReference type="PROSITE" id="PS51843">
    <property type="entry name" value="NR_LBD"/>
    <property type="match status" value="1"/>
</dbReference>
<dbReference type="PROSITE" id="PS00031">
    <property type="entry name" value="NUCLEAR_REC_DBD_1"/>
    <property type="match status" value="1"/>
</dbReference>
<dbReference type="PROSITE" id="PS51030">
    <property type="entry name" value="NUCLEAR_REC_DBD_2"/>
    <property type="match status" value="1"/>
</dbReference>
<accession>O95718</accession>
<accession>A2VDJ2</accession>
<accession>B6ZGU4</accession>
<accession>Q5F0P7</accession>
<accession>Q5F0P8</accession>
<accession>Q9HCB4</accession>
<sequence>MSSDDRHLGSSCGSFIKTEPSSPSSGIDALSHHSPSGSSDASGGFGLALGTHANGLDSPPMFAGAGLGGTPCRKSYEDCASGIMEDSAIKCEYMLNAIPKRLCLVCGDIASGYHYGVASCEACKAFFKRTIQGNIEYSCPATNECEITKRRRKSCQACRFMKCLKVGMLKEGVRLDRVRGGRQKYKRRLDSESSPYLSLQISPPAKKPLTKIVSYLLVAEPDKLYAMPPPGMPEGDIKALTTLCDLADRELVVIIGWAKHIPGFSSLSLGDQMSLLQSAWMEILILGIVYRSLPYDDKLVYAEDYIMDEEHSRLAGLLELYRAILQLVRRYKKLKVEKEEFVTLKALALANSDSMYIEDLEAVQKLQDLLHEALQDYELSQRHEEPWRTGKLLLTLPLLRQTAAKAVQHFYSVKLQGKVPMHKLFLEMLEAKV</sequence>
<gene>
    <name evidence="14" type="primary">ESRRB</name>
    <name type="synonym">ERRB2</name>
    <name type="synonym">ESRL2</name>
    <name type="synonym">NR3B2</name>
</gene>
<organism>
    <name type="scientific">Homo sapiens</name>
    <name type="common">Human</name>
    <dbReference type="NCBI Taxonomy" id="9606"/>
    <lineage>
        <taxon>Eukaryota</taxon>
        <taxon>Metazoa</taxon>
        <taxon>Chordata</taxon>
        <taxon>Craniata</taxon>
        <taxon>Vertebrata</taxon>
        <taxon>Euteleostomi</taxon>
        <taxon>Mammalia</taxon>
        <taxon>Eutheria</taxon>
        <taxon>Euarchontoglires</taxon>
        <taxon>Primates</taxon>
        <taxon>Haplorrhini</taxon>
        <taxon>Catarrhini</taxon>
        <taxon>Hominidae</taxon>
        <taxon>Homo</taxon>
    </lineage>
</organism>
<proteinExistence type="evidence at protein level"/>
<reference key="1">
    <citation type="journal article" date="1999" name="Gene">
        <title>Identification of two hERR2-related novel nuclear receptors utilizing bioinformatics and inverse PCR.</title>
        <authorList>
            <person name="Chen F."/>
            <person name="Zhang Q."/>
            <person name="McDonald T."/>
            <person name="Davidoff M.J."/>
            <person name="Bailey W."/>
            <person name="Bai C."/>
            <person name="Liu Q."/>
            <person name="Caskey C.T."/>
        </authorList>
    </citation>
    <scope>NUCLEOTIDE SEQUENCE [MRNA] (ISOFORM 2)</scope>
    <source>
        <tissue>Testis</tissue>
    </source>
</reference>
<reference key="2">
    <citation type="journal article" date="2006" name="J. Clin. Endocrinol. Metab.">
        <title>Identification and characterization of two novel splicing isoforms of human estrogen-related receptor beta.</title>
        <authorList>
            <person name="Zhou W."/>
            <person name="Liu Z."/>
            <person name="Wu J."/>
            <person name="Liu J.H."/>
            <person name="Hyder S.M."/>
            <person name="Antoniou E."/>
            <person name="Lubahn D.B."/>
        </authorList>
    </citation>
    <scope>NUCLEOTIDE SEQUENCE [MRNA] (ISOFORMS 1 AND 3)</scope>
    <scope>ALTERNATIVE SPLICING</scope>
    <source>
        <tissue>Heart</tissue>
        <tissue>Testis</tissue>
    </source>
</reference>
<reference key="3">
    <citation type="submission" date="2008-12" db="EMBL/GenBank/DDBJ databases">
        <title>Comprehensive DNA-binding analysis of human hormone nuclear receptors by fluorescence correlation spectroscopy based on cell-free system.</title>
        <authorList>
            <person name="Kobayashi T."/>
            <person name="Kodani Y."/>
            <person name="Sawasaki T."/>
            <person name="Endo Y."/>
        </authorList>
    </citation>
    <scope>NUCLEOTIDE SEQUENCE [MRNA] (ISOFORM 3)</scope>
</reference>
<reference key="4">
    <citation type="submission" date="2010-12" db="EMBL/GenBank/DDBJ databases">
        <title>Isolation of cDNA coding for multiple human nuclear receptor clones.</title>
        <authorList>
            <person name="Kaighin V.A."/>
            <person name="Martin A.L."/>
            <person name="Aronstam R.S."/>
        </authorList>
    </citation>
    <scope>NUCLEOTIDE SEQUENCE [LARGE SCALE MRNA] (ISOFORM 1)</scope>
    <source>
        <tissue>Testis</tissue>
    </source>
</reference>
<reference key="5">
    <citation type="journal article" date="2003" name="Nature">
        <title>The DNA sequence and analysis of human chromosome 14.</title>
        <authorList>
            <person name="Heilig R."/>
            <person name="Eckenberg R."/>
            <person name="Petit J.-L."/>
            <person name="Fonknechten N."/>
            <person name="Da Silva C."/>
            <person name="Cattolico L."/>
            <person name="Levy M."/>
            <person name="Barbe V."/>
            <person name="De Berardinis V."/>
            <person name="Ureta-Vidal A."/>
            <person name="Pelletier E."/>
            <person name="Vico V."/>
            <person name="Anthouard V."/>
            <person name="Rowen L."/>
            <person name="Madan A."/>
            <person name="Qin S."/>
            <person name="Sun H."/>
            <person name="Du H."/>
            <person name="Pepin K."/>
            <person name="Artiguenave F."/>
            <person name="Robert C."/>
            <person name="Cruaud C."/>
            <person name="Bruels T."/>
            <person name="Jaillon O."/>
            <person name="Friedlander L."/>
            <person name="Samson G."/>
            <person name="Brottier P."/>
            <person name="Cure S."/>
            <person name="Segurens B."/>
            <person name="Aniere F."/>
            <person name="Samain S."/>
            <person name="Crespeau H."/>
            <person name="Abbasi N."/>
            <person name="Aiach N."/>
            <person name="Boscus D."/>
            <person name="Dickhoff R."/>
            <person name="Dors M."/>
            <person name="Dubois I."/>
            <person name="Friedman C."/>
            <person name="Gouyvenoux M."/>
            <person name="James R."/>
            <person name="Madan A."/>
            <person name="Mairey-Estrada B."/>
            <person name="Mangenot S."/>
            <person name="Martins N."/>
            <person name="Menard M."/>
            <person name="Oztas S."/>
            <person name="Ratcliffe A."/>
            <person name="Shaffer T."/>
            <person name="Trask B."/>
            <person name="Vacherie B."/>
            <person name="Bellemere C."/>
            <person name="Belser C."/>
            <person name="Besnard-Gonnet M."/>
            <person name="Bartol-Mavel D."/>
            <person name="Boutard M."/>
            <person name="Briez-Silla S."/>
            <person name="Combette S."/>
            <person name="Dufosse-Laurent V."/>
            <person name="Ferron C."/>
            <person name="Lechaplais C."/>
            <person name="Louesse C."/>
            <person name="Muselet D."/>
            <person name="Magdelenat G."/>
            <person name="Pateau E."/>
            <person name="Petit E."/>
            <person name="Sirvain-Trukniewicz P."/>
            <person name="Trybou A."/>
            <person name="Vega-Czarny N."/>
            <person name="Bataille E."/>
            <person name="Bluet E."/>
            <person name="Bordelais I."/>
            <person name="Dubois M."/>
            <person name="Dumont C."/>
            <person name="Guerin T."/>
            <person name="Haffray S."/>
            <person name="Hammadi R."/>
            <person name="Muanga J."/>
            <person name="Pellouin V."/>
            <person name="Robert D."/>
            <person name="Wunderle E."/>
            <person name="Gauguet G."/>
            <person name="Roy A."/>
            <person name="Sainte-Marthe L."/>
            <person name="Verdier J."/>
            <person name="Verdier-Discala C."/>
            <person name="Hillier L.W."/>
            <person name="Fulton L."/>
            <person name="McPherson J."/>
            <person name="Matsuda F."/>
            <person name="Wilson R."/>
            <person name="Scarpelli C."/>
            <person name="Gyapay G."/>
            <person name="Wincker P."/>
            <person name="Saurin W."/>
            <person name="Quetier F."/>
            <person name="Waterston R."/>
            <person name="Hood L."/>
            <person name="Weissenbach J."/>
        </authorList>
    </citation>
    <scope>NUCLEOTIDE SEQUENCE [LARGE SCALE GENOMIC DNA]</scope>
</reference>
<reference key="6">
    <citation type="journal article" date="2004" name="Genome Res.">
        <title>The status, quality, and expansion of the NIH full-length cDNA project: the Mammalian Gene Collection (MGC).</title>
        <authorList>
            <consortium name="The MGC Project Team"/>
        </authorList>
    </citation>
    <scope>NUCLEOTIDE SEQUENCE [LARGE SCALE MRNA] (ISOFORM 1)</scope>
</reference>
<reference key="7">
    <citation type="journal article" date="2007" name="Mol. Cell. Endocrinol.">
        <title>ERRbeta: a potent inhibitor of Nrf2 transcriptional activity.</title>
        <authorList>
            <person name="Zhou W."/>
            <person name="Lo S.C."/>
            <person name="Liu J.H."/>
            <person name="Hannink M."/>
            <person name="Lubahn D.B."/>
        </authorList>
    </citation>
    <scope>FUNCTION (ISOFORM 3)</scope>
    <scope>INTERACTION WITH NFE2L2</scope>
</reference>
<reference key="8">
    <citation type="journal article" date="2010" name="Mol. Cell. Endocrinol.">
        <title>Modulation of ER alpha transcriptional activity by the orphan nuclear receptor ERR beta and evidence for differential effects of long- and short-form splice variants.</title>
        <authorList>
            <person name="Bombail V."/>
            <person name="Collins F."/>
            <person name="Brown P."/>
            <person name="Saunders P.T."/>
        </authorList>
    </citation>
    <scope>FUNCTION</scope>
    <scope>ALTERNATIVE SPLICING</scope>
    <scope>INTERACTION WITH ESR1</scope>
</reference>
<reference key="9">
    <citation type="journal article" date="2013" name="J. Biol. Chem.">
        <title>Peroxisome proliferator-activated receptor gamma coactivator 1 (PGC-1)- and estrogen-related receptor (ERR)-induced regulator in muscle 1 (Perm1) is a tissue-specific regulator of oxidative capacity in skeletal muscle cells.</title>
        <authorList>
            <person name="Cho Y."/>
            <person name="Hazen B.C."/>
            <person name="Russell A.P."/>
            <person name="Kralli A."/>
        </authorList>
    </citation>
    <scope>FUNCTION</scope>
</reference>
<reference key="10">
    <citation type="journal article" date="2008" name="Hum. Reprod.">
        <title>Estrogen receptor related beta is expressed in human endometrium throughout the normal menstrual cycle.</title>
        <authorList>
            <person name="Bombail V."/>
            <person name="MacPherson S."/>
            <person name="Critchley H.O."/>
            <person name="Saunders P.T."/>
        </authorList>
    </citation>
    <scope>SUBCELLULAR LOCATION</scope>
</reference>
<reference key="11">
    <citation type="journal article" date="2010" name="Mol. Endocrinol.">
        <title>An acetylation switch modulates the transcriptional activity of estrogen-related receptor alpha.</title>
        <authorList>
            <person name="Wilson B.J."/>
            <person name="Tremblay A.M."/>
            <person name="Deblois G."/>
            <person name="Sylvain-Drolet G."/>
            <person name="Giguere V."/>
        </authorList>
    </citation>
    <scope>ACETYLATION BY PCAF/KAT2B</scope>
</reference>
<reference key="12">
    <citation type="journal article" date="2003" name="J. Mol. Biol.">
        <title>Monomeric complex of human orphan estrogen related receptor-2 with DNA: a pseudo-dimer interface mediates extended half-site recognition.</title>
        <authorList>
            <person name="Gearhart M.D."/>
            <person name="Holmbeck S.M."/>
            <person name="Evans R.M."/>
            <person name="Dyson H.J."/>
            <person name="Wright P.E."/>
        </authorList>
    </citation>
    <scope>STRUCTURE BY NMR OF 97-194</scope>
    <scope>SUBUNIT</scope>
    <scope>DNA-BINDING</scope>
    <scope>MUTAGENESIS OF TYR-185</scope>
</reference>
<reference key="13">
    <citation type="journal article" date="2008" name="Am. J. Hum. Genet.">
        <title>Mutations of ESRRB encoding estrogen-related receptor beta cause autosomal-recessive nonsyndromic hearing impairment DFNB35.</title>
        <authorList>
            <person name="Collin R.W.J."/>
            <person name="Kalay E."/>
            <person name="Tariq M."/>
            <person name="Peters T."/>
            <person name="van der Zwaag B."/>
            <person name="Venselaar H."/>
            <person name="Oostrik J."/>
            <person name="Lee K."/>
            <person name="Ahmed Z.M."/>
            <person name="Caylan R."/>
            <person name="Li Y."/>
            <person name="Spierenburg H.A."/>
            <person name="Eyupoglu E."/>
            <person name="Heister A."/>
            <person name="Riazuddin S."/>
            <person name="Bahat E."/>
            <person name="Ansar M."/>
            <person name="Arslan S."/>
            <person name="Wollnik B."/>
            <person name="Brunner H.G."/>
            <person name="Cremers C.W.R.J."/>
            <person name="Karaguzel A."/>
            <person name="Ahmad W."/>
            <person name="Cremers F.P.M."/>
            <person name="Vriend G."/>
            <person name="Friedman T.B."/>
            <person name="Riazuddin S."/>
            <person name="Leal S.M."/>
            <person name="Kremer H."/>
        </authorList>
    </citation>
    <scope>VARIANTS DFNB35 VAL-110; PRO-320; LEU-342; PRO-347 AND MET-389</scope>
    <scope>VARIANT SER-386</scope>
</reference>
<protein>
    <recommendedName>
        <fullName evidence="13">Steroid hormone receptor ERR2</fullName>
    </recommendedName>
    <alternativeName>
        <fullName>ERR beta-2</fullName>
    </alternativeName>
    <alternativeName>
        <fullName>Estrogen receptor-like 2</fullName>
    </alternativeName>
    <alternativeName>
        <fullName evidence="12">Estrogen-related receptor beta</fullName>
        <shortName>ERR-beta</shortName>
    </alternativeName>
    <alternativeName>
        <fullName>Nuclear receptor subfamily 3 group B member 2</fullName>
    </alternativeName>
</protein>
<name>ERR2_HUMAN</name>
<keyword id="KW-0002">3D-structure</keyword>
<keyword id="KW-0007">Acetylation</keyword>
<keyword id="KW-0025">Alternative splicing</keyword>
<keyword id="KW-0158">Chromosome</keyword>
<keyword id="KW-0963">Cytoplasm</keyword>
<keyword id="KW-0209">Deafness</keyword>
<keyword id="KW-0225">Disease variant</keyword>
<keyword id="KW-0238">DNA-binding</keyword>
<keyword id="KW-0479">Metal-binding</keyword>
<keyword id="KW-1010">Non-syndromic deafness</keyword>
<keyword id="KW-0539">Nucleus</keyword>
<keyword id="KW-1267">Proteomics identification</keyword>
<keyword id="KW-0675">Receptor</keyword>
<keyword id="KW-1185">Reference proteome</keyword>
<keyword id="KW-0804">Transcription</keyword>
<keyword id="KW-0805">Transcription regulation</keyword>
<keyword id="KW-0862">Zinc</keyword>
<keyword id="KW-0863">Zinc-finger</keyword>
<comment type="function">
    <molecule>Isoform 3</molecule>
    <text evidence="1 6 9 11">Transcription factor that binds a canonical ESRRB recognition (ERRE) sequence 5'TCAAGGTCA-3' localized on promoter and enhancer of targets genes regulating their expression or their transcription activity (PubMed:17920186, PubMed:19755138). Plays a role, in a LIF-independent manner, in maintainance of self-renewal and pluripotency of embryonic and trophoblast stem cells through different signaling pathways including FGF signaling pathway and Wnt signaling pathways. Involved in morula development (2-16 cells embryos) by acting as a regulator at the 8-cell stage (By similarity). Upon FGF signaling pathway activation, interacts with KDM1A by directly binding to enhancer site of ELF5 and EOMES and activating their transcription leading to self-renewal of trophoblast stem cells. Also regulates expression of multiple rod-specific genes and is required for survival of this cell type (By similarity). Plays a role as transcription factor activator of GATA6, NR0B1, POU5F1 and PERM1 (PubMed:23836911). Plays a role as transcription factor repressor of NFE2L2 transcriptional activity and ESR1 transcriptional activity (PubMed:17920186, PubMed:19755138). During mitosis remains bound to a subset of interphase target genes, including pluripotency regulators, through the canonical ESRRB recognition (ERRE) sequence, leading to their transcriptional activation in early G1 phase. Can coassemble on structured DNA elements with other transcription factors like SOX2, POU5F1, KDM1A and NCOA3 to trigger ESRRB-dependent gene activation. This mechanism, in the case of SOX2 corecruitment prevents the embryonic stem cells (ESCs) to epiblast stem cells (EpiSC) transition through positive regulation of NR0B1 that inhibits the EpiSC transcriptional program. Also plays a role inner ear development by controlling expression of ion channels and transporters and in early placentation (By similarity).</text>
</comment>
<comment type="function">
    <molecule>Isoform 1</molecule>
    <text evidence="9">Transcription factor that binds a canonical ESRRB recognition (ERRE) sequence 5'TCAAGGTCA-3' localized on promoter and enhancer of targets genes regulating their expression or their transcription activity. Positively regulates ESR1 transcriptional activity upon E2 stimulation.</text>
</comment>
<comment type="subunit">
    <text evidence="1 5 6 9">Binds DNA as a monomer (PubMed:12654265). Interacts with NR0B1; represses ESRRB activity at the GATA6 promoter. Interacts with NANOG; reciprocally modulates their transcriptional activities and activates POU5F1 expression. Interacts with NCOA3; mediates the interaction between ESRRB and RNA polymerase II complexes and allows NCOA3 corecruitment to ESRRB, KLF4, NANOG, and SOX2 enhancer regions to trigger ESRRB-dependent gene activation involved in self-renewal and pluripotency. Interacts with KDM1A; co-occupes the core set of ESRRB targets including ELF5 and EOMES. Interacts with the multiprotein complex Integrator, at least composed of INTS1, INTS2, INTS3, INTS4, INTS5, INTS6, INTS7, INTS8, INTS9/RC74, INTS10, INTS11/CPSF3L and INTS12; ESRRB is probably not a core component of the integrator complex and associates to integrator via its interaction with INTS1 and INTS9; attracts the transcriptional machinery. Interacts with JARID2. Interacts with POU5F1; recruits ESRRB near the POU5F1-SOX2 element in the NANOG proximal promoter leading to activation of NANOG expression; the interaction is DNA independent (By similarity). Interacts with NFE2L2; represses NFE2L2 transcriptional activity (PubMed:17920186). Isoform 1 interacts with ESR1 (PubMed:19755138).</text>
</comment>
<comment type="interaction">
    <interactant intactId="EBI-13303537">
        <id>O95718-2</id>
    </interactant>
    <interactant intactId="EBI-12001340">
        <id>P62508-3</id>
        <label>ESRRG</label>
    </interactant>
    <organismsDiffer>false</organismsDiffer>
    <experiments>3</experiments>
</comment>
<comment type="subcellular location">
    <subcellularLocation>
        <location evidence="8">Nucleus</location>
    </subcellularLocation>
    <subcellularLocation>
        <location evidence="1">Cytoplasm</location>
    </subcellularLocation>
    <subcellularLocation>
        <location evidence="1">Chromosome</location>
    </subcellularLocation>
</comment>
<comment type="alternative products">
    <event type="alternative splicing"/>
    <isoform>
        <id>O95718-3</id>
        <name>3</name>
        <name evidence="12">ERRbeta-short-form</name>
        <sequence type="displayed"/>
    </isoform>
    <isoform>
        <id>O95718-1</id>
        <name>1</name>
        <name evidence="12">ERRbeta2-delta10</name>
        <sequence type="described" ref="VSP_058967"/>
    </isoform>
    <isoform>
        <id>O95718-2</id>
        <name>2</name>
        <name evidence="12">ERRbeta2</name>
        <sequence type="described" ref="VSP_058968"/>
    </isoform>
</comment>
<comment type="PTM">
    <text evidence="10">Acetylated by PCAF/KAT2 (in vitro).</text>
</comment>
<comment type="disease" evidence="7">
    <disease id="DI-00872">
        <name>Deafness, autosomal recessive, 35</name>
        <acronym>DFNB35</acronym>
        <description>A form of non-syndromic deafness characterized by non-progressive, prelingual hearing loss.</description>
        <dbReference type="MIM" id="608565"/>
    </disease>
    <text>The disease is caused by variants affecting the gene represented in this entry.</text>
</comment>
<comment type="miscellaneous">
    <molecule>Isoform 1</molecule>
    <text evidence="12">Primate-specific splicing isoform.</text>
</comment>
<comment type="miscellaneous">
    <molecule>Isoform 2</molecule>
    <text evidence="12">Primate-specific splicing isoform.</text>
</comment>
<comment type="similarity">
    <text evidence="13">Belongs to the nuclear hormone receptor family. NR3 subfamily.</text>
</comment>
<feature type="chain" id="PRO_0000053662" description="Steroid hormone receptor ERR2">
    <location>
        <begin position="1"/>
        <end position="433"/>
    </location>
</feature>
<feature type="domain" description="NR LBD" evidence="3">
    <location>
        <begin position="208"/>
        <end position="432"/>
    </location>
</feature>
<feature type="DNA-binding region" description="Nuclear receptor" evidence="2">
    <location>
        <begin position="100"/>
        <end position="186"/>
    </location>
</feature>
<feature type="zinc finger region" description="NR C4-type" evidence="2">
    <location>
        <begin position="103"/>
        <end position="123"/>
    </location>
</feature>
<feature type="zinc finger region" description="NR C4-type" evidence="2">
    <location>
        <begin position="139"/>
        <end position="163"/>
    </location>
</feature>
<feature type="region of interest" description="Disordered" evidence="4">
    <location>
        <begin position="1"/>
        <end position="38"/>
    </location>
</feature>
<feature type="region of interest" description="Interaction with NANOG" evidence="1">
    <location>
        <begin position="93"/>
        <end position="211"/>
    </location>
</feature>
<feature type="region of interest" description="Essential for ESRRB transcriptional activity and interaction with NCOA3" evidence="1">
    <location>
        <begin position="203"/>
        <end position="433"/>
    </location>
</feature>
<feature type="compositionally biased region" description="Low complexity" evidence="4">
    <location>
        <begin position="28"/>
        <end position="38"/>
    </location>
</feature>
<feature type="site" description="Important for stabilizing DNA-binding">
    <location>
        <position position="185"/>
    </location>
</feature>
<feature type="splice variant" id="VSP_058967" description="In isoform 1.">
    <original>V</original>
    <variation>VGQEQLRGSPKDERMSSHDGKCPFQSAAFTSRDQSNSPGIPNPRPSSPTPLNERGRQISPSTRTPGGQGKHLWLTM</variation>
    <location>
        <position position="433"/>
    </location>
</feature>
<feature type="splice variant" id="VSP_058968" description="In isoform 2.">
    <original>V</original>
    <variation>AWARADSLQEWRPLEQVPSPLHRATKRQHVHFLTPLPPPPSVAWVGTAQAGYHLEVFLPQRAGWPRAA</variation>
    <location>
        <position position="433"/>
    </location>
</feature>
<feature type="sequence variant" id="VAR_043503" description="In DFNB35; dbSNP:rs121909110." evidence="7">
    <original>A</original>
    <variation>V</variation>
    <location>
        <position position="110"/>
    </location>
</feature>
<feature type="sequence variant" id="VAR_043504" description="In DFNB35." evidence="7">
    <original>L</original>
    <variation>P</variation>
    <location>
        <position position="320"/>
    </location>
</feature>
<feature type="sequence variant" id="VAR_043505" description="In DFNB35; dbSNP:rs121909111." evidence="7">
    <original>V</original>
    <variation>L</variation>
    <location>
        <position position="342"/>
    </location>
</feature>
<feature type="sequence variant" id="VAR_043506" description="In DFNB35." evidence="7">
    <original>L</original>
    <variation>P</variation>
    <location>
        <position position="347"/>
    </location>
</feature>
<feature type="sequence variant" id="VAR_043507" description="In dbSNP:rs61742642." evidence="7">
    <original>P</original>
    <variation>S</variation>
    <location>
        <position position="386"/>
    </location>
</feature>
<feature type="sequence variant" id="VAR_043508" description="In DFNB35; uncertain significance; dbSNP:rs201714970." evidence="7">
    <original>T</original>
    <variation>M</variation>
    <location>
        <position position="389"/>
    </location>
</feature>
<feature type="mutagenesis site" description="6-fold decrease in DNA-binding affinity." evidence="5">
    <original>Y</original>
    <variation>A</variation>
    <location>
        <position position="185"/>
    </location>
</feature>
<feature type="sequence conflict" description="In Ref. 3; BAH02305." evidence="13" ref="3">
    <original>D</original>
    <variation>E</variation>
    <location>
        <position position="248"/>
    </location>
</feature>
<feature type="sequence conflict" description="In Ref. 6; AAI31518." evidence="13" ref="6">
    <original>L</original>
    <variation>V</variation>
    <location>
        <position position="429"/>
    </location>
</feature>
<feature type="turn" evidence="15">
    <location>
        <begin position="104"/>
        <end position="107"/>
    </location>
</feature>
<feature type="strand" evidence="15">
    <location>
        <begin position="111"/>
        <end position="119"/>
    </location>
</feature>
<feature type="helix" evidence="15">
    <location>
        <begin position="121"/>
        <end position="132"/>
    </location>
</feature>
<feature type="helix" evidence="15">
    <location>
        <begin position="149"/>
        <end position="154"/>
    </location>
</feature>
<feature type="helix" evidence="15">
    <location>
        <begin position="156"/>
        <end position="166"/>
    </location>
</feature>
<feature type="helix" evidence="15">
    <location>
        <begin position="170"/>
        <end position="172"/>
    </location>
</feature>
<feature type="helix" evidence="17">
    <location>
        <begin position="212"/>
        <end position="218"/>
    </location>
</feature>
<feature type="helix" evidence="16">
    <location>
        <begin position="236"/>
        <end position="258"/>
    </location>
</feature>
<feature type="helix" evidence="16">
    <location>
        <begin position="264"/>
        <end position="266"/>
    </location>
</feature>
<feature type="helix" evidence="16">
    <location>
        <begin position="269"/>
        <end position="292"/>
    </location>
</feature>
<feature type="strand" evidence="16">
    <location>
        <begin position="295"/>
        <end position="297"/>
    </location>
</feature>
<feature type="strand" evidence="16">
    <location>
        <begin position="299"/>
        <end position="302"/>
    </location>
</feature>
<feature type="strand" evidence="16">
    <location>
        <begin position="305"/>
        <end position="307"/>
    </location>
</feature>
<feature type="helix" evidence="16">
    <location>
        <begin position="309"/>
        <end position="314"/>
    </location>
</feature>
<feature type="helix" evidence="16">
    <location>
        <begin position="318"/>
        <end position="334"/>
    </location>
</feature>
<feature type="helix" evidence="16">
    <location>
        <begin position="338"/>
        <end position="350"/>
    </location>
</feature>
<feature type="helix" evidence="16">
    <location>
        <begin position="360"/>
        <end position="381"/>
    </location>
</feature>
<feature type="turn" evidence="17">
    <location>
        <begin position="382"/>
        <end position="384"/>
    </location>
</feature>
<feature type="helix" evidence="16">
    <location>
        <begin position="388"/>
        <end position="393"/>
    </location>
</feature>
<feature type="helix" evidence="16">
    <location>
        <begin position="396"/>
        <end position="416"/>
    </location>
</feature>
<feature type="helix" evidence="16">
    <location>
        <begin position="423"/>
        <end position="430"/>
    </location>
</feature>